<organism>
    <name type="scientific">Streptomyces coelicolor (strain ATCC BAA-471 / A3(2) / M145)</name>
    <dbReference type="NCBI Taxonomy" id="100226"/>
    <lineage>
        <taxon>Bacteria</taxon>
        <taxon>Bacillati</taxon>
        <taxon>Actinomycetota</taxon>
        <taxon>Actinomycetes</taxon>
        <taxon>Kitasatosporales</taxon>
        <taxon>Streptomycetaceae</taxon>
        <taxon>Streptomyces</taxon>
        <taxon>Streptomyces albidoflavus group</taxon>
    </lineage>
</organism>
<evidence type="ECO:0000250" key="1"/>
<evidence type="ECO:0000256" key="2">
    <source>
        <dbReference type="SAM" id="MobiDB-lite"/>
    </source>
</evidence>
<evidence type="ECO:0000305" key="3"/>
<keyword id="KW-0238">DNA-binding</keyword>
<keyword id="KW-1185">Reference proteome</keyword>
<keyword id="KW-0731">Sigma factor</keyword>
<keyword id="KW-0804">Transcription</keyword>
<keyword id="KW-0805">Transcription regulation</keyword>
<comment type="function">
    <text evidence="1">Sigma factors are initiation factors that promote the attachment of RNA polymerase to specific initiation sites and are then released.</text>
</comment>
<comment type="subunit">
    <text evidence="1">Interacts transiently with the RNA polymerase catalytic core.</text>
</comment>
<comment type="similarity">
    <text evidence="3">Belongs to the sigma-70 factor family.</text>
</comment>
<dbReference type="EMBL" id="X52981">
    <property type="protein sequence ID" value="CAA37173.1"/>
    <property type="molecule type" value="Genomic_DNA"/>
</dbReference>
<dbReference type="EMBL" id="AL939107">
    <property type="protein sequence ID" value="CAB62686.1"/>
    <property type="molecule type" value="Genomic_DNA"/>
</dbReference>
<dbReference type="PIR" id="S17930">
    <property type="entry name" value="S17930"/>
</dbReference>
<dbReference type="RefSeq" id="NP_625194.1">
    <property type="nucleotide sequence ID" value="NC_003888.3"/>
</dbReference>
<dbReference type="RefSeq" id="WP_003977963.1">
    <property type="nucleotide sequence ID" value="NZ_VNID01000004.1"/>
</dbReference>
<dbReference type="SMR" id="P18184"/>
<dbReference type="STRING" id="100226.gene:17758478"/>
<dbReference type="PaxDb" id="100226-SCO0895"/>
<dbReference type="KEGG" id="sco:SCO0895"/>
<dbReference type="PATRIC" id="fig|100226.15.peg.887"/>
<dbReference type="eggNOG" id="COG0568">
    <property type="taxonomic scope" value="Bacteria"/>
</dbReference>
<dbReference type="HOGENOM" id="CLU_014793_3_5_11"/>
<dbReference type="InParanoid" id="P18184"/>
<dbReference type="OrthoDB" id="9804285at2"/>
<dbReference type="PhylomeDB" id="P18184"/>
<dbReference type="Proteomes" id="UP000001973">
    <property type="component" value="Chromosome"/>
</dbReference>
<dbReference type="GO" id="GO:0003677">
    <property type="term" value="F:DNA binding"/>
    <property type="evidence" value="ECO:0007669"/>
    <property type="project" value="UniProtKB-KW"/>
</dbReference>
<dbReference type="GO" id="GO:0016987">
    <property type="term" value="F:sigma factor activity"/>
    <property type="evidence" value="ECO:0007669"/>
    <property type="project" value="UniProtKB-KW"/>
</dbReference>
<dbReference type="GO" id="GO:0006352">
    <property type="term" value="P:DNA-templated transcription initiation"/>
    <property type="evidence" value="ECO:0007669"/>
    <property type="project" value="InterPro"/>
</dbReference>
<dbReference type="FunFam" id="1.10.601.10:FF:000001">
    <property type="entry name" value="RNA polymerase sigma factor SigA"/>
    <property type="match status" value="1"/>
</dbReference>
<dbReference type="Gene3D" id="1.10.601.10">
    <property type="entry name" value="RNA Polymerase Primary Sigma Factor"/>
    <property type="match status" value="2"/>
</dbReference>
<dbReference type="Gene3D" id="1.10.10.10">
    <property type="entry name" value="Winged helix-like DNA-binding domain superfamily/Winged helix DNA-binding domain"/>
    <property type="match status" value="2"/>
</dbReference>
<dbReference type="InterPro" id="IPR014284">
    <property type="entry name" value="RNA_pol_sigma-70_dom"/>
</dbReference>
<dbReference type="InterPro" id="IPR000943">
    <property type="entry name" value="RNA_pol_sigma70"/>
</dbReference>
<dbReference type="InterPro" id="IPR009042">
    <property type="entry name" value="RNA_pol_sigma70_r1_2"/>
</dbReference>
<dbReference type="InterPro" id="IPR007627">
    <property type="entry name" value="RNA_pol_sigma70_r2"/>
</dbReference>
<dbReference type="InterPro" id="IPR007624">
    <property type="entry name" value="RNA_pol_sigma70_r3"/>
</dbReference>
<dbReference type="InterPro" id="IPR007630">
    <property type="entry name" value="RNA_pol_sigma70_r4"/>
</dbReference>
<dbReference type="InterPro" id="IPR013325">
    <property type="entry name" value="RNA_pol_sigma_r2"/>
</dbReference>
<dbReference type="InterPro" id="IPR013324">
    <property type="entry name" value="RNA_pol_sigma_r3/r4-like"/>
</dbReference>
<dbReference type="InterPro" id="IPR050239">
    <property type="entry name" value="Sigma-70_RNA_pol_init_factors"/>
</dbReference>
<dbReference type="InterPro" id="IPR036388">
    <property type="entry name" value="WH-like_DNA-bd_sf"/>
</dbReference>
<dbReference type="NCBIfam" id="TIGR02937">
    <property type="entry name" value="sigma70-ECF"/>
    <property type="match status" value="1"/>
</dbReference>
<dbReference type="PANTHER" id="PTHR30603">
    <property type="entry name" value="RNA POLYMERASE SIGMA FACTOR RPO"/>
    <property type="match status" value="1"/>
</dbReference>
<dbReference type="PANTHER" id="PTHR30603:SF60">
    <property type="entry name" value="RNA POLYMERASE SIGMA FACTOR RPOD"/>
    <property type="match status" value="1"/>
</dbReference>
<dbReference type="Pfam" id="PF00140">
    <property type="entry name" value="Sigma70_r1_2"/>
    <property type="match status" value="1"/>
</dbReference>
<dbReference type="Pfam" id="PF04542">
    <property type="entry name" value="Sigma70_r2"/>
    <property type="match status" value="1"/>
</dbReference>
<dbReference type="Pfam" id="PF04539">
    <property type="entry name" value="Sigma70_r3"/>
    <property type="match status" value="1"/>
</dbReference>
<dbReference type="Pfam" id="PF04545">
    <property type="entry name" value="Sigma70_r4"/>
    <property type="match status" value="1"/>
</dbReference>
<dbReference type="PRINTS" id="PR00046">
    <property type="entry name" value="SIGMA70FCT"/>
</dbReference>
<dbReference type="SUPFAM" id="SSF88946">
    <property type="entry name" value="Sigma2 domain of RNA polymerase sigma factors"/>
    <property type="match status" value="1"/>
</dbReference>
<dbReference type="SUPFAM" id="SSF88659">
    <property type="entry name" value="Sigma3 and sigma4 domains of RNA polymerase sigma factors"/>
    <property type="match status" value="2"/>
</dbReference>
<dbReference type="PROSITE" id="PS00715">
    <property type="entry name" value="SIGMA70_1"/>
    <property type="match status" value="1"/>
</dbReference>
<dbReference type="PROSITE" id="PS00716">
    <property type="entry name" value="SIGMA70_2"/>
    <property type="match status" value="1"/>
</dbReference>
<sequence>MAPTARTPTARTRDDRRATTRTARLRTRIPEPDEEPDLLGQYLTQIGATPLLTAEDEVRLATRIEAGVRAREELETADTGEPAPTPRRRRTLEETVHDGQEAKDHMVRANLRLVVSMAKRHAHRGLPLLDVIQEGNLGLIRAVEKFDHTKGFKFSTYATWWIRQAIERGLATHARTVRLPVHVVEQLQKLAKVERKLRAGLDREPTTEEVAAESGIDVDKVVWLRRVGRDAVSLDTPVDETGDTVVGDLIPDTEVLRAPEVAEFQALAAELREAVGTLAPRESLILSLRYGLHDGRPRTLQQVAQHVGLTRERVRQLEKESLAHLRAPENRERLLDWAS</sequence>
<proteinExistence type="inferred from homology"/>
<feature type="chain" id="PRO_0000093993" description="RNA polymerase principal sigma factor HrdC">
    <location>
        <begin position="1"/>
        <end position="339"/>
    </location>
</feature>
<feature type="DNA-binding region" description="H-T-H motif" evidence="1">
    <location>
        <begin position="300"/>
        <end position="319"/>
    </location>
</feature>
<feature type="region of interest" description="Disordered" evidence="2">
    <location>
        <begin position="1"/>
        <end position="37"/>
    </location>
</feature>
<feature type="region of interest" description="Disordered" evidence="2">
    <location>
        <begin position="71"/>
        <end position="101"/>
    </location>
</feature>
<feature type="short sequence motif" description="Polymerase core binding">
    <location>
        <begin position="130"/>
        <end position="143"/>
    </location>
</feature>
<feature type="compositionally biased region" description="Low complexity" evidence="2">
    <location>
        <begin position="1"/>
        <end position="10"/>
    </location>
</feature>
<feature type="compositionally biased region" description="Basic and acidic residues" evidence="2">
    <location>
        <begin position="91"/>
        <end position="101"/>
    </location>
</feature>
<feature type="sequence conflict" description="In Ref. 3; no nucleotide entry." evidence="3" ref="3">
    <original>H</original>
    <variation>HI</variation>
    <location>
        <position position="173"/>
    </location>
</feature>
<reference key="1">
    <citation type="journal article" date="1991" name="Mol. Gen. Genet.">
        <title>Nucleotide sequence of genes hrdA, hrdC, and hrdD from Streptomyces coelicolor A3(2) having similarity to rpoD genes.</title>
        <authorList>
            <person name="Tanaka K."/>
            <person name="Shiina T."/>
            <person name="Takahashi H."/>
        </authorList>
    </citation>
    <scope>NUCLEOTIDE SEQUENCE [GENOMIC DNA]</scope>
    <source>
        <strain>A3(2) / NRRL B-16638</strain>
    </source>
</reference>
<reference key="2">
    <citation type="journal article" date="2002" name="Nature">
        <title>Complete genome sequence of the model actinomycete Streptomyces coelicolor A3(2).</title>
        <authorList>
            <person name="Bentley S.D."/>
            <person name="Chater K.F."/>
            <person name="Cerdeno-Tarraga A.-M."/>
            <person name="Challis G.L."/>
            <person name="Thomson N.R."/>
            <person name="James K.D."/>
            <person name="Harris D.E."/>
            <person name="Quail M.A."/>
            <person name="Kieser H."/>
            <person name="Harper D."/>
            <person name="Bateman A."/>
            <person name="Brown S."/>
            <person name="Chandra G."/>
            <person name="Chen C.W."/>
            <person name="Collins M."/>
            <person name="Cronin A."/>
            <person name="Fraser A."/>
            <person name="Goble A."/>
            <person name="Hidalgo J."/>
            <person name="Hornsby T."/>
            <person name="Howarth S."/>
            <person name="Huang C.-H."/>
            <person name="Kieser T."/>
            <person name="Larke L."/>
            <person name="Murphy L.D."/>
            <person name="Oliver K."/>
            <person name="O'Neil S."/>
            <person name="Rabbinowitsch E."/>
            <person name="Rajandream M.A."/>
            <person name="Rutherford K.M."/>
            <person name="Rutter S."/>
            <person name="Seeger K."/>
            <person name="Saunders D."/>
            <person name="Sharp S."/>
            <person name="Squares R."/>
            <person name="Squares S."/>
            <person name="Taylor K."/>
            <person name="Warren T."/>
            <person name="Wietzorrek A."/>
            <person name="Woodward J.R."/>
            <person name="Barrell B.G."/>
            <person name="Parkhill J."/>
            <person name="Hopwood D.A."/>
        </authorList>
    </citation>
    <scope>NUCLEOTIDE SEQUENCE [LARGE SCALE GENOMIC DNA]</scope>
    <source>
        <strain>ATCC BAA-471 / A3(2) / M145</strain>
    </source>
</reference>
<reference key="3">
    <citation type="journal article" date="1988" name="Science">
        <title>Multiple principal sigma factor homologs in eubacteria: identification of the 'rpoD box'.</title>
        <authorList>
            <person name="Tanaka K."/>
            <person name="Shiina T."/>
            <person name="Takahashi H."/>
        </authorList>
    </citation>
    <scope>NUCLEOTIDE SEQUENCE [GENOMIC DNA] OF 134-185</scope>
    <source>
        <strain>A3(2) / NRRL B-16638</strain>
    </source>
</reference>
<name>HRDC_STRCO</name>
<accession>P18184</accession>
<gene>
    <name type="primary">hrdC</name>
    <name type="ordered locus">SCO0895</name>
    <name type="ORF">SCM1.28c</name>
</gene>
<protein>
    <recommendedName>
        <fullName>RNA polymerase principal sigma factor HrdC</fullName>
    </recommendedName>
</protein>